<comment type="function">
    <text evidence="1">Catalyzes the reversible oxidation of malate to oxaloacetate.</text>
</comment>
<comment type="catalytic activity">
    <reaction evidence="1">
        <text>(S)-malate + NAD(+) = oxaloacetate + NADH + H(+)</text>
        <dbReference type="Rhea" id="RHEA:21432"/>
        <dbReference type="ChEBI" id="CHEBI:15378"/>
        <dbReference type="ChEBI" id="CHEBI:15589"/>
        <dbReference type="ChEBI" id="CHEBI:16452"/>
        <dbReference type="ChEBI" id="CHEBI:57540"/>
        <dbReference type="ChEBI" id="CHEBI:57945"/>
        <dbReference type="EC" id="1.1.1.37"/>
    </reaction>
</comment>
<comment type="subunit">
    <text evidence="1">Homodimer.</text>
</comment>
<comment type="similarity">
    <text evidence="1">Belongs to the LDH/MDH superfamily. MDH type 1 family.</text>
</comment>
<accession>B5FIT7</accession>
<reference key="1">
    <citation type="journal article" date="2011" name="J. Bacteriol.">
        <title>Comparative genomics of 28 Salmonella enterica isolates: evidence for CRISPR-mediated adaptive sublineage evolution.</title>
        <authorList>
            <person name="Fricke W.F."/>
            <person name="Mammel M.K."/>
            <person name="McDermott P.F."/>
            <person name="Tartera C."/>
            <person name="White D.G."/>
            <person name="Leclerc J.E."/>
            <person name="Ravel J."/>
            <person name="Cebula T.A."/>
        </authorList>
    </citation>
    <scope>NUCLEOTIDE SEQUENCE [LARGE SCALE GENOMIC DNA]</scope>
    <source>
        <strain>CT_02021853</strain>
    </source>
</reference>
<dbReference type="EC" id="1.1.1.37" evidence="1"/>
<dbReference type="EMBL" id="CP001144">
    <property type="protein sequence ID" value="ACH76409.1"/>
    <property type="molecule type" value="Genomic_DNA"/>
</dbReference>
<dbReference type="RefSeq" id="WP_000861593.1">
    <property type="nucleotide sequence ID" value="NC_011205.1"/>
</dbReference>
<dbReference type="SMR" id="B5FIT7"/>
<dbReference type="KEGG" id="sed:SeD_A3719"/>
<dbReference type="HOGENOM" id="CLU_047181_1_0_6"/>
<dbReference type="Proteomes" id="UP000008322">
    <property type="component" value="Chromosome"/>
</dbReference>
<dbReference type="GO" id="GO:0005737">
    <property type="term" value="C:cytoplasm"/>
    <property type="evidence" value="ECO:0007669"/>
    <property type="project" value="TreeGrafter"/>
</dbReference>
<dbReference type="GO" id="GO:0030060">
    <property type="term" value="F:L-malate dehydrogenase (NAD+) activity"/>
    <property type="evidence" value="ECO:0007669"/>
    <property type="project" value="UniProtKB-UniRule"/>
</dbReference>
<dbReference type="GO" id="GO:0006108">
    <property type="term" value="P:malate metabolic process"/>
    <property type="evidence" value="ECO:0007669"/>
    <property type="project" value="InterPro"/>
</dbReference>
<dbReference type="GO" id="GO:0006099">
    <property type="term" value="P:tricarboxylic acid cycle"/>
    <property type="evidence" value="ECO:0007669"/>
    <property type="project" value="UniProtKB-UniRule"/>
</dbReference>
<dbReference type="CDD" id="cd01337">
    <property type="entry name" value="MDH_glyoxysomal_mitochondrial"/>
    <property type="match status" value="1"/>
</dbReference>
<dbReference type="FunFam" id="3.40.50.720:FF:000017">
    <property type="entry name" value="Malate dehydrogenase"/>
    <property type="match status" value="1"/>
</dbReference>
<dbReference type="FunFam" id="3.90.110.10:FF:000001">
    <property type="entry name" value="Malate dehydrogenase"/>
    <property type="match status" value="1"/>
</dbReference>
<dbReference type="Gene3D" id="3.90.110.10">
    <property type="entry name" value="Lactate dehydrogenase/glycoside hydrolase, family 4, C-terminal"/>
    <property type="match status" value="1"/>
</dbReference>
<dbReference type="Gene3D" id="3.40.50.720">
    <property type="entry name" value="NAD(P)-binding Rossmann-like Domain"/>
    <property type="match status" value="1"/>
</dbReference>
<dbReference type="HAMAP" id="MF_01516">
    <property type="entry name" value="Malate_dehydrog_1"/>
    <property type="match status" value="1"/>
</dbReference>
<dbReference type="InterPro" id="IPR001557">
    <property type="entry name" value="L-lactate/malate_DH"/>
</dbReference>
<dbReference type="InterPro" id="IPR022383">
    <property type="entry name" value="Lactate/malate_DH_C"/>
</dbReference>
<dbReference type="InterPro" id="IPR001236">
    <property type="entry name" value="Lactate/malate_DH_N"/>
</dbReference>
<dbReference type="InterPro" id="IPR015955">
    <property type="entry name" value="Lactate_DH/Glyco_Ohase_4_C"/>
</dbReference>
<dbReference type="InterPro" id="IPR001252">
    <property type="entry name" value="Malate_DH_AS"/>
</dbReference>
<dbReference type="InterPro" id="IPR010097">
    <property type="entry name" value="Malate_DH_type1"/>
</dbReference>
<dbReference type="InterPro" id="IPR023958">
    <property type="entry name" value="Malate_DH_type1_bac"/>
</dbReference>
<dbReference type="InterPro" id="IPR036291">
    <property type="entry name" value="NAD(P)-bd_dom_sf"/>
</dbReference>
<dbReference type="NCBIfam" id="TIGR01772">
    <property type="entry name" value="MDH_euk_gproteo"/>
    <property type="match status" value="1"/>
</dbReference>
<dbReference type="PANTHER" id="PTHR11540">
    <property type="entry name" value="MALATE AND LACTATE DEHYDROGENASE"/>
    <property type="match status" value="1"/>
</dbReference>
<dbReference type="PANTHER" id="PTHR11540:SF16">
    <property type="entry name" value="MALATE DEHYDROGENASE, MITOCHONDRIAL"/>
    <property type="match status" value="1"/>
</dbReference>
<dbReference type="Pfam" id="PF02866">
    <property type="entry name" value="Ldh_1_C"/>
    <property type="match status" value="1"/>
</dbReference>
<dbReference type="Pfam" id="PF00056">
    <property type="entry name" value="Ldh_1_N"/>
    <property type="match status" value="1"/>
</dbReference>
<dbReference type="PIRSF" id="PIRSF000102">
    <property type="entry name" value="Lac_mal_DH"/>
    <property type="match status" value="1"/>
</dbReference>
<dbReference type="SUPFAM" id="SSF56327">
    <property type="entry name" value="LDH C-terminal domain-like"/>
    <property type="match status" value="1"/>
</dbReference>
<dbReference type="SUPFAM" id="SSF51735">
    <property type="entry name" value="NAD(P)-binding Rossmann-fold domains"/>
    <property type="match status" value="1"/>
</dbReference>
<dbReference type="PROSITE" id="PS00068">
    <property type="entry name" value="MDH"/>
    <property type="match status" value="1"/>
</dbReference>
<protein>
    <recommendedName>
        <fullName evidence="1">Malate dehydrogenase</fullName>
        <ecNumber evidence="1">1.1.1.37</ecNumber>
    </recommendedName>
</protein>
<gene>
    <name evidence="1" type="primary">mdh</name>
    <name type="ordered locus">SeD_A3719</name>
</gene>
<name>MDH_SALDC</name>
<proteinExistence type="inferred from homology"/>
<evidence type="ECO:0000255" key="1">
    <source>
        <dbReference type="HAMAP-Rule" id="MF_01516"/>
    </source>
</evidence>
<feature type="chain" id="PRO_1000191590" description="Malate dehydrogenase">
    <location>
        <begin position="1"/>
        <end position="312"/>
    </location>
</feature>
<feature type="active site" description="Proton acceptor" evidence="1">
    <location>
        <position position="177"/>
    </location>
</feature>
<feature type="binding site" evidence="1">
    <location>
        <begin position="7"/>
        <end position="13"/>
    </location>
    <ligand>
        <name>NAD(+)</name>
        <dbReference type="ChEBI" id="CHEBI:57540"/>
    </ligand>
</feature>
<feature type="binding site" evidence="1">
    <location>
        <position position="34"/>
    </location>
    <ligand>
        <name>NAD(+)</name>
        <dbReference type="ChEBI" id="CHEBI:57540"/>
    </ligand>
</feature>
<feature type="binding site" evidence="1">
    <location>
        <position position="81"/>
    </location>
    <ligand>
        <name>substrate</name>
    </ligand>
</feature>
<feature type="binding site" evidence="1">
    <location>
        <position position="87"/>
    </location>
    <ligand>
        <name>substrate</name>
    </ligand>
</feature>
<feature type="binding site" evidence="1">
    <location>
        <position position="94"/>
    </location>
    <ligand>
        <name>NAD(+)</name>
        <dbReference type="ChEBI" id="CHEBI:57540"/>
    </ligand>
</feature>
<feature type="binding site" evidence="1">
    <location>
        <begin position="117"/>
        <end position="119"/>
    </location>
    <ligand>
        <name>NAD(+)</name>
        <dbReference type="ChEBI" id="CHEBI:57540"/>
    </ligand>
</feature>
<feature type="binding site" evidence="1">
    <location>
        <position position="119"/>
    </location>
    <ligand>
        <name>substrate</name>
    </ligand>
</feature>
<feature type="binding site" evidence="1">
    <location>
        <position position="153"/>
    </location>
    <ligand>
        <name>substrate</name>
    </ligand>
</feature>
<feature type="binding site" evidence="1">
    <location>
        <position position="227"/>
    </location>
    <ligand>
        <name>NAD(+)</name>
        <dbReference type="ChEBI" id="CHEBI:57540"/>
    </ligand>
</feature>
<sequence length="312" mass="32504">MKVAVLGAAGGIGQALALLLKNQLPSGSELSLYDIAPVTPGVAVDLSHIPTAVKIKGFSGEDATPALEGADVVLISAGVARRPGMDRSDLFNVNAGIVKNLVQQIAKTCPKACVGIITNPVNTTVAIAAEVLKKAGVYDKNKLFGVTTLDIIRSNTFVAELKGKLPTEVEVPVIGGHSGVTILPLLSQIPGVSFTEQEAAELTKRIQNAGTEVVEAKAGGGSATLSMGQAAARFGLSLVRALQGEKGVVECAYVEGDGQYARFFSQPLLLGKNGVEERKSIGTLSAFEQHSLDAMLDTLKKDIQLGEDFINK</sequence>
<organism>
    <name type="scientific">Salmonella dublin (strain CT_02021853)</name>
    <dbReference type="NCBI Taxonomy" id="439851"/>
    <lineage>
        <taxon>Bacteria</taxon>
        <taxon>Pseudomonadati</taxon>
        <taxon>Pseudomonadota</taxon>
        <taxon>Gammaproteobacteria</taxon>
        <taxon>Enterobacterales</taxon>
        <taxon>Enterobacteriaceae</taxon>
        <taxon>Salmonella</taxon>
    </lineage>
</organism>
<keyword id="KW-0520">NAD</keyword>
<keyword id="KW-0560">Oxidoreductase</keyword>
<keyword id="KW-0816">Tricarboxylic acid cycle</keyword>